<proteinExistence type="inferred from homology"/>
<gene>
    <name evidence="1" type="primary">xerC</name>
    <name type="ordered locus">CV_2372</name>
</gene>
<evidence type="ECO:0000255" key="1">
    <source>
        <dbReference type="HAMAP-Rule" id="MF_01808"/>
    </source>
</evidence>
<evidence type="ECO:0000255" key="2">
    <source>
        <dbReference type="PROSITE-ProRule" id="PRU01246"/>
    </source>
</evidence>
<evidence type="ECO:0000255" key="3">
    <source>
        <dbReference type="PROSITE-ProRule" id="PRU01248"/>
    </source>
</evidence>
<keyword id="KW-0131">Cell cycle</keyword>
<keyword id="KW-0132">Cell division</keyword>
<keyword id="KW-0159">Chromosome partition</keyword>
<keyword id="KW-0963">Cytoplasm</keyword>
<keyword id="KW-0229">DNA integration</keyword>
<keyword id="KW-0233">DNA recombination</keyword>
<keyword id="KW-0238">DNA-binding</keyword>
<keyword id="KW-1185">Reference proteome</keyword>
<sequence>MDEAIRRFIEHLAVAGRSPHTLAAYRADIELLENMMQAKSARDATAAELRKALAKLHAQGLSSRSLARRLSSWRQFYHWLQRNGEREDNPAAGLYAPKRDKLLPKALPVDGTAALLDRIEGESELDARDRAIFELVYSCGLRLSETVALNLDDVDFSDSLLRIRGKGGKERLVPIGAEAMLRLRTWLGERSAGMDEPALFLGRHGHRLGGRQVEKRLRDWAIKTGAGQHVHPHMLRHSFASHMLQSSGDLRAVQELLGHANLSSTQIYTALDFQHLAKVYDGAHPRARKRGKPDDENKS</sequence>
<name>XERC_CHRVO</name>
<feature type="chain" id="PRO_1000069998" description="Tyrosine recombinase XerC">
    <location>
        <begin position="1"/>
        <end position="299"/>
    </location>
</feature>
<feature type="domain" description="Core-binding (CB)" evidence="3">
    <location>
        <begin position="1"/>
        <end position="81"/>
    </location>
</feature>
<feature type="domain" description="Tyr recombinase" evidence="2">
    <location>
        <begin position="102"/>
        <end position="281"/>
    </location>
</feature>
<feature type="active site" evidence="1">
    <location>
        <position position="142"/>
    </location>
</feature>
<feature type="active site" evidence="1">
    <location>
        <position position="166"/>
    </location>
</feature>
<feature type="active site" evidence="1">
    <location>
        <position position="233"/>
    </location>
</feature>
<feature type="active site" evidence="1">
    <location>
        <position position="236"/>
    </location>
</feature>
<feature type="active site" evidence="1">
    <location>
        <position position="259"/>
    </location>
</feature>
<feature type="active site" description="O-(3'-phospho-DNA)-tyrosine intermediate" evidence="1">
    <location>
        <position position="268"/>
    </location>
</feature>
<reference key="1">
    <citation type="journal article" date="2003" name="Proc. Natl. Acad. Sci. U.S.A.">
        <title>The complete genome sequence of Chromobacterium violaceum reveals remarkable and exploitable bacterial adaptability.</title>
        <authorList>
            <person name="Vasconcelos A.T.R."/>
            <person name="de Almeida D.F."/>
            <person name="Hungria M."/>
            <person name="Guimaraes C.T."/>
            <person name="Antonio R.V."/>
            <person name="Almeida F.C."/>
            <person name="de Almeida L.G.P."/>
            <person name="de Almeida R."/>
            <person name="Alves-Gomes J.A."/>
            <person name="Andrade E.M."/>
            <person name="Araripe J."/>
            <person name="de Araujo M.F.F."/>
            <person name="Astolfi-Filho S."/>
            <person name="Azevedo V."/>
            <person name="Baptista A.J."/>
            <person name="Bataus L.A.M."/>
            <person name="Batista J.S."/>
            <person name="Belo A."/>
            <person name="van den Berg C."/>
            <person name="Bogo M."/>
            <person name="Bonatto S."/>
            <person name="Bordignon J."/>
            <person name="Brigido M.M."/>
            <person name="Brito C.A."/>
            <person name="Brocchi M."/>
            <person name="Burity H.A."/>
            <person name="Camargo A.A."/>
            <person name="Cardoso D.D.P."/>
            <person name="Carneiro N.P."/>
            <person name="Carraro D.M."/>
            <person name="Carvalho C.M.B."/>
            <person name="Cascardo J.C.M."/>
            <person name="Cavada B.S."/>
            <person name="Chueire L.M.O."/>
            <person name="Creczynski-Pasa T.B."/>
            <person name="Cunha-Junior N.C."/>
            <person name="Fagundes N."/>
            <person name="Falcao C.L."/>
            <person name="Fantinatti F."/>
            <person name="Farias I.P."/>
            <person name="Felipe M.S.S."/>
            <person name="Ferrari L.P."/>
            <person name="Ferro J.A."/>
            <person name="Ferro M.I.T."/>
            <person name="Franco G.R."/>
            <person name="Freitas N.S.A."/>
            <person name="Furlan L.R."/>
            <person name="Gazzinelli R.T."/>
            <person name="Gomes E.A."/>
            <person name="Goncalves P.R."/>
            <person name="Grangeiro T.B."/>
            <person name="Grattapaglia D."/>
            <person name="Grisard E.C."/>
            <person name="Hanna E.S."/>
            <person name="Jardim S.N."/>
            <person name="Laurino J."/>
            <person name="Leoi L.C.T."/>
            <person name="Lima L.F.A."/>
            <person name="Loureiro M.F."/>
            <person name="Lyra M.C.C.P."/>
            <person name="Madeira H.M.F."/>
            <person name="Manfio G.P."/>
            <person name="Maranhao A.Q."/>
            <person name="Martins W.S."/>
            <person name="di Mauro S.M.Z."/>
            <person name="de Medeiros S.R.B."/>
            <person name="Meissner R.V."/>
            <person name="Moreira M.A.M."/>
            <person name="Nascimento F.F."/>
            <person name="Nicolas M.F."/>
            <person name="Oliveira J.G."/>
            <person name="Oliveira S.C."/>
            <person name="Paixao R.F.C."/>
            <person name="Parente J.A."/>
            <person name="Pedrosa F.O."/>
            <person name="Pena S.D.J."/>
            <person name="Pereira J.O."/>
            <person name="Pereira M."/>
            <person name="Pinto L.S.R.C."/>
            <person name="Pinto L.S."/>
            <person name="Porto J.I.R."/>
            <person name="Potrich D.P."/>
            <person name="Ramalho-Neto C.E."/>
            <person name="Reis A.M.M."/>
            <person name="Rigo L.U."/>
            <person name="Rondinelli E."/>
            <person name="Santos E.B.P."/>
            <person name="Santos F.R."/>
            <person name="Schneider M.P.C."/>
            <person name="Seuanez H.N."/>
            <person name="Silva A.M.R."/>
            <person name="da Silva A.L.C."/>
            <person name="Silva D.W."/>
            <person name="Silva R."/>
            <person name="Simoes I.C."/>
            <person name="Simon D."/>
            <person name="Soares C.M.A."/>
            <person name="Soares R.B.A."/>
            <person name="Souza E.M."/>
            <person name="Souza K.R.L."/>
            <person name="Souza R.C."/>
            <person name="Steffens M.B.R."/>
            <person name="Steindel M."/>
            <person name="Teixeira S.R."/>
            <person name="Urmenyi T."/>
            <person name="Vettore A."/>
            <person name="Wassem R."/>
            <person name="Zaha A."/>
            <person name="Simpson A.J.G."/>
        </authorList>
    </citation>
    <scope>NUCLEOTIDE SEQUENCE [LARGE SCALE GENOMIC DNA]</scope>
    <source>
        <strain>ATCC 12472 / DSM 30191 / JCM 1249 / CCUG 213 / NBRC 12614 / NCIMB 9131 / NCTC 9757 / MK</strain>
    </source>
</reference>
<dbReference type="EMBL" id="AE016825">
    <property type="protein sequence ID" value="AAQ60044.1"/>
    <property type="molecule type" value="Genomic_DNA"/>
</dbReference>
<dbReference type="RefSeq" id="WP_011135919.1">
    <property type="nucleotide sequence ID" value="NC_005085.1"/>
</dbReference>
<dbReference type="SMR" id="Q7NVH1"/>
<dbReference type="STRING" id="243365.CV_2372"/>
<dbReference type="KEGG" id="cvi:CV_2372"/>
<dbReference type="eggNOG" id="COG4973">
    <property type="taxonomic scope" value="Bacteria"/>
</dbReference>
<dbReference type="HOGENOM" id="CLU_027562_9_0_4"/>
<dbReference type="OrthoDB" id="9801717at2"/>
<dbReference type="Proteomes" id="UP000001424">
    <property type="component" value="Chromosome"/>
</dbReference>
<dbReference type="GO" id="GO:0005737">
    <property type="term" value="C:cytoplasm"/>
    <property type="evidence" value="ECO:0007669"/>
    <property type="project" value="UniProtKB-SubCell"/>
</dbReference>
<dbReference type="GO" id="GO:0003677">
    <property type="term" value="F:DNA binding"/>
    <property type="evidence" value="ECO:0007669"/>
    <property type="project" value="UniProtKB-KW"/>
</dbReference>
<dbReference type="GO" id="GO:0009037">
    <property type="term" value="F:tyrosine-based site-specific recombinase activity"/>
    <property type="evidence" value="ECO:0007669"/>
    <property type="project" value="UniProtKB-UniRule"/>
</dbReference>
<dbReference type="GO" id="GO:0051301">
    <property type="term" value="P:cell division"/>
    <property type="evidence" value="ECO:0007669"/>
    <property type="project" value="UniProtKB-KW"/>
</dbReference>
<dbReference type="GO" id="GO:0007059">
    <property type="term" value="P:chromosome segregation"/>
    <property type="evidence" value="ECO:0007669"/>
    <property type="project" value="UniProtKB-UniRule"/>
</dbReference>
<dbReference type="GO" id="GO:0006313">
    <property type="term" value="P:DNA transposition"/>
    <property type="evidence" value="ECO:0007669"/>
    <property type="project" value="UniProtKB-UniRule"/>
</dbReference>
<dbReference type="CDD" id="cd00798">
    <property type="entry name" value="INT_XerDC_C"/>
    <property type="match status" value="1"/>
</dbReference>
<dbReference type="Gene3D" id="1.10.150.130">
    <property type="match status" value="1"/>
</dbReference>
<dbReference type="Gene3D" id="1.10.443.10">
    <property type="entry name" value="Intergrase catalytic core"/>
    <property type="match status" value="1"/>
</dbReference>
<dbReference type="HAMAP" id="MF_01808">
    <property type="entry name" value="Recomb_XerC_XerD"/>
    <property type="match status" value="1"/>
</dbReference>
<dbReference type="InterPro" id="IPR044068">
    <property type="entry name" value="CB"/>
</dbReference>
<dbReference type="InterPro" id="IPR011010">
    <property type="entry name" value="DNA_brk_join_enz"/>
</dbReference>
<dbReference type="InterPro" id="IPR013762">
    <property type="entry name" value="Integrase-like_cat_sf"/>
</dbReference>
<dbReference type="InterPro" id="IPR002104">
    <property type="entry name" value="Integrase_catalytic"/>
</dbReference>
<dbReference type="InterPro" id="IPR010998">
    <property type="entry name" value="Integrase_recombinase_N"/>
</dbReference>
<dbReference type="InterPro" id="IPR004107">
    <property type="entry name" value="Integrase_SAM-like_N"/>
</dbReference>
<dbReference type="InterPro" id="IPR011931">
    <property type="entry name" value="Recomb_XerC"/>
</dbReference>
<dbReference type="InterPro" id="IPR023009">
    <property type="entry name" value="Tyrosine_recombinase_XerC/XerD"/>
</dbReference>
<dbReference type="InterPro" id="IPR050090">
    <property type="entry name" value="Tyrosine_recombinase_XerCD"/>
</dbReference>
<dbReference type="NCBIfam" id="NF040815">
    <property type="entry name" value="recomb_XerA_Arch"/>
    <property type="match status" value="1"/>
</dbReference>
<dbReference type="NCBIfam" id="TIGR02224">
    <property type="entry name" value="recomb_XerC"/>
    <property type="match status" value="1"/>
</dbReference>
<dbReference type="PANTHER" id="PTHR30349">
    <property type="entry name" value="PHAGE INTEGRASE-RELATED"/>
    <property type="match status" value="1"/>
</dbReference>
<dbReference type="PANTHER" id="PTHR30349:SF81">
    <property type="entry name" value="TYROSINE RECOMBINASE XERC"/>
    <property type="match status" value="1"/>
</dbReference>
<dbReference type="Pfam" id="PF02899">
    <property type="entry name" value="Phage_int_SAM_1"/>
    <property type="match status" value="1"/>
</dbReference>
<dbReference type="Pfam" id="PF00589">
    <property type="entry name" value="Phage_integrase"/>
    <property type="match status" value="1"/>
</dbReference>
<dbReference type="SUPFAM" id="SSF56349">
    <property type="entry name" value="DNA breaking-rejoining enzymes"/>
    <property type="match status" value="1"/>
</dbReference>
<dbReference type="PROSITE" id="PS51900">
    <property type="entry name" value="CB"/>
    <property type="match status" value="1"/>
</dbReference>
<dbReference type="PROSITE" id="PS51898">
    <property type="entry name" value="TYR_RECOMBINASE"/>
    <property type="match status" value="1"/>
</dbReference>
<accession>Q7NVH1</accession>
<organism>
    <name type="scientific">Chromobacterium violaceum (strain ATCC 12472 / DSM 30191 / JCM 1249 / CCUG 213 / NBRC 12614 / NCIMB 9131 / NCTC 9757 / MK)</name>
    <dbReference type="NCBI Taxonomy" id="243365"/>
    <lineage>
        <taxon>Bacteria</taxon>
        <taxon>Pseudomonadati</taxon>
        <taxon>Pseudomonadota</taxon>
        <taxon>Betaproteobacteria</taxon>
        <taxon>Neisseriales</taxon>
        <taxon>Chromobacteriaceae</taxon>
        <taxon>Chromobacterium</taxon>
    </lineage>
</organism>
<protein>
    <recommendedName>
        <fullName evidence="1">Tyrosine recombinase XerC</fullName>
    </recommendedName>
</protein>
<comment type="function">
    <text evidence="1">Site-specific tyrosine recombinase, which acts by catalyzing the cutting and rejoining of the recombining DNA molecules. The XerC-XerD complex is essential to convert dimers of the bacterial chromosome into monomers to permit their segregation at cell division. It also contributes to the segregational stability of plasmids.</text>
</comment>
<comment type="subunit">
    <text evidence="1">Forms a cyclic heterotetrameric complex composed of two molecules of XerC and two molecules of XerD.</text>
</comment>
<comment type="subcellular location">
    <subcellularLocation>
        <location evidence="1">Cytoplasm</location>
    </subcellularLocation>
</comment>
<comment type="similarity">
    <text evidence="1">Belongs to the 'phage' integrase family. XerC subfamily.</text>
</comment>